<evidence type="ECO:0000250" key="1"/>
<evidence type="ECO:0000255" key="2"/>
<evidence type="ECO:0000255" key="3">
    <source>
        <dbReference type="PROSITE-ProRule" id="PRU00096"/>
    </source>
</evidence>
<evidence type="ECO:0000269" key="4">
    <source>
    </source>
</evidence>
<evidence type="ECO:0000269" key="5">
    <source>
    </source>
</evidence>
<evidence type="ECO:0000269" key="6">
    <source>
    </source>
</evidence>
<evidence type="ECO:0000303" key="7">
    <source>
    </source>
</evidence>
<evidence type="ECO:0000305" key="8"/>
<name>TMED7_HUMAN</name>
<accession>Q9Y3B3</accession>
<accession>Q8NBU8</accession>
<accession>Q8WUU6</accession>
<accession>Q96K51</accession>
<feature type="signal peptide" evidence="2">
    <location>
        <begin position="1"/>
        <end position="34"/>
    </location>
</feature>
<feature type="chain" id="PRO_0000010395" description="Transmembrane emp24 domain-containing protein 7">
    <location>
        <begin position="35"/>
        <end position="224"/>
    </location>
</feature>
<feature type="topological domain" description="Lumenal" evidence="2">
    <location>
        <begin position="35"/>
        <end position="187"/>
    </location>
</feature>
<feature type="transmembrane region" description="Helical" evidence="2">
    <location>
        <begin position="188"/>
        <end position="208"/>
    </location>
</feature>
<feature type="topological domain" description="Cytoplasmic" evidence="2">
    <location>
        <begin position="209"/>
        <end position="224"/>
    </location>
</feature>
<feature type="domain" description="GOLD" evidence="3">
    <location>
        <begin position="46"/>
        <end position="128"/>
    </location>
</feature>
<feature type="short sequence motif" description="COPI vesicle coat-binding" evidence="2">
    <location>
        <begin position="211"/>
        <end position="224"/>
    </location>
</feature>
<feature type="short sequence motif" description="COPII vesicle coat-binding" evidence="2">
    <location>
        <begin position="211"/>
        <end position="212"/>
    </location>
</feature>
<feature type="glycosylation site" description="N-linked (GlcNAc...) asparagine" evidence="2">
    <location>
        <position position="103"/>
    </location>
</feature>
<feature type="splice variant" id="VSP_046247" description="In isoform 2." evidence="7">
    <location>
        <begin position="189"/>
        <end position="224"/>
    </location>
</feature>
<feature type="sequence conflict" description="In Ref. 1; AAD34104." evidence="8" ref="1">
    <original>MPRPGSAQRWAAVAGRWGCRLLA</original>
    <variation>MGSTVPRSASVLLLL</variation>
    <location>
        <begin position="1"/>
        <end position="23"/>
    </location>
</feature>
<feature type="sequence conflict" description="In Ref. 1; AAD34104." evidence="8" ref="1">
    <original>LVPGPGGASEI</original>
    <variation>RRAEQPCGAEL</variation>
    <location>
        <begin position="27"/>
        <end position="37"/>
    </location>
</feature>
<feature type="sequence conflict" description="In Ref. 1; AAD34104." evidence="8" ref="1">
    <original>C</original>
    <variation>S</variation>
    <location>
        <position position="59"/>
    </location>
</feature>
<feature type="sequence conflict" description="In Ref. 1; AAD34104." evidence="8" ref="1">
    <original>DPPLFPSEN</original>
    <variation>THLCFLVD</variation>
    <location>
        <begin position="131"/>
        <end position="139"/>
    </location>
</feature>
<feature type="sequence conflict" description="In Ref. 2; BAB55166." evidence="8" ref="2">
    <original>S</original>
    <variation>P</variation>
    <location>
        <position position="213"/>
    </location>
</feature>
<protein>
    <recommendedName>
        <fullName>Transmembrane emp24 domain-containing protein 7</fullName>
    </recommendedName>
    <alternativeName>
        <fullName>p24 family protein gamma-3</fullName>
        <shortName>p24gamma3</shortName>
    </alternativeName>
    <alternativeName>
        <fullName>p27</fullName>
    </alternativeName>
</protein>
<sequence length="224" mass="25172">MPRPGSAQRWAAVAGRWGCRLLALLLLVPGPGGASEITFELPDNAKQCFYEDIAQGTKCTLEFQVITGGHYDVDCRLEDPDGKVLYKEMKKQYDSFTFTASKNGTYKFCFSNEFSTFTHKTVYFDFQVGEDPPLFPSENRVSALTQMESACVSIHEALKSVIDYQTHFRLREAQGRSRAEDLNTRVAYWSVGEALILLVVSIGQVFLLKSFFSDKRTTTTRVGS</sequence>
<proteinExistence type="evidence at protein level"/>
<organism>
    <name type="scientific">Homo sapiens</name>
    <name type="common">Human</name>
    <dbReference type="NCBI Taxonomy" id="9606"/>
    <lineage>
        <taxon>Eukaryota</taxon>
        <taxon>Metazoa</taxon>
        <taxon>Chordata</taxon>
        <taxon>Craniata</taxon>
        <taxon>Vertebrata</taxon>
        <taxon>Euteleostomi</taxon>
        <taxon>Mammalia</taxon>
        <taxon>Eutheria</taxon>
        <taxon>Euarchontoglires</taxon>
        <taxon>Primates</taxon>
        <taxon>Haplorrhini</taxon>
        <taxon>Catarrhini</taxon>
        <taxon>Hominidae</taxon>
        <taxon>Homo</taxon>
    </lineage>
</organism>
<keyword id="KW-0025">Alternative splicing</keyword>
<keyword id="KW-0968">Cytoplasmic vesicle</keyword>
<keyword id="KW-0256">Endoplasmic reticulum</keyword>
<keyword id="KW-0325">Glycoprotein</keyword>
<keyword id="KW-0333">Golgi apparatus</keyword>
<keyword id="KW-0472">Membrane</keyword>
<keyword id="KW-0653">Protein transport</keyword>
<keyword id="KW-1267">Proteomics identification</keyword>
<keyword id="KW-1185">Reference proteome</keyword>
<keyword id="KW-0732">Signal</keyword>
<keyword id="KW-0812">Transmembrane</keyword>
<keyword id="KW-1133">Transmembrane helix</keyword>
<keyword id="KW-0813">Transport</keyword>
<comment type="function">
    <text>Potential role in vesicular protein trafficking, mainly in the early secretory pathway. Appears to play a role in the biosynthesis of secreted cargo including processing and post-translational modifications.</text>
</comment>
<comment type="subunit">
    <text evidence="4 5 6">Predominantly monomeric and to lesser extent homodimeric in endoplasmic reticulum, endoplasmic reticulum-Golgi intermediate compartment and cis-Golgi network. Oligomerizes with other members of the EMP24/GP25L family such as TMED2, TMED9 and TMED10. Interacts (via C-terminus) with COPG1; the interaction involves dimeric TMED7.</text>
</comment>
<comment type="interaction">
    <interactant intactId="EBI-2561467">
        <id>Q9Y3B3</id>
    </interactant>
    <interactant intactId="EBI-924893">
        <id>Q9UQ80</id>
        <label>PA2G4</label>
    </interactant>
    <organismsDiffer>false</organismsDiffer>
    <experiments>3</experiments>
</comment>
<comment type="subcellular location">
    <subcellularLocation>
        <location>Endoplasmic reticulum membrane</location>
        <topology>Single-pass type I membrane protein</topology>
    </subcellularLocation>
    <subcellularLocation>
        <location>Golgi apparatus</location>
        <location>cis-Golgi network membrane</location>
        <topology>Single-pass type I membrane protein</topology>
    </subcellularLocation>
    <subcellularLocation>
        <location>Endoplasmic reticulum-Golgi intermediate compartment membrane</location>
        <topology>Single-pass type I membrane protein</topology>
    </subcellularLocation>
    <subcellularLocation>
        <location evidence="1">Cytoplasmic vesicle</location>
        <location evidence="1">COPI-coated vesicle membrane</location>
        <topology evidence="1">Single-pass type I membrane protein</topology>
    </subcellularLocation>
    <subcellularLocation>
        <location evidence="1">Cytoplasmic vesicle</location>
        <location evidence="1">COPII-coated vesicle membrane</location>
        <topology evidence="1">Single-pass type I membrane protein</topology>
    </subcellularLocation>
    <text>Cycles between compartments of the early secretatory pathway.</text>
</comment>
<comment type="alternative products">
    <event type="alternative splicing"/>
    <isoform>
        <id>Q9Y3B3-1</id>
        <name>1</name>
        <sequence type="displayed"/>
    </isoform>
    <isoform>
        <id>Q9Y3B3-2</id>
        <name>2</name>
        <sequence type="described" ref="VSP_046247"/>
    </isoform>
</comment>
<comment type="PTM">
    <text evidence="4">N-linked glycosylated in complex form containing terminal sialic acid.</text>
</comment>
<comment type="similarity">
    <text evidence="8">Belongs to the EMP24/GP25L family.</text>
</comment>
<gene>
    <name type="primary">TMED7</name>
    <name type="ORF">CGI-109</name>
</gene>
<reference key="1">
    <citation type="journal article" date="2000" name="Genome Res.">
        <title>Identification of novel human genes evolutionarily conserved in Caenorhabditis elegans by comparative proteomics.</title>
        <authorList>
            <person name="Lai C.-H."/>
            <person name="Chou C.-Y."/>
            <person name="Ch'ang L.-Y."/>
            <person name="Liu C.-S."/>
            <person name="Lin W.-C."/>
        </authorList>
    </citation>
    <scope>NUCLEOTIDE SEQUENCE [LARGE SCALE MRNA] (ISOFORM 1)</scope>
</reference>
<reference key="2">
    <citation type="journal article" date="2004" name="Nat. Genet.">
        <title>Complete sequencing and characterization of 21,243 full-length human cDNAs.</title>
        <authorList>
            <person name="Ota T."/>
            <person name="Suzuki Y."/>
            <person name="Nishikawa T."/>
            <person name="Otsuki T."/>
            <person name="Sugiyama T."/>
            <person name="Irie R."/>
            <person name="Wakamatsu A."/>
            <person name="Hayashi K."/>
            <person name="Sato H."/>
            <person name="Nagai K."/>
            <person name="Kimura K."/>
            <person name="Makita H."/>
            <person name="Sekine M."/>
            <person name="Obayashi M."/>
            <person name="Nishi T."/>
            <person name="Shibahara T."/>
            <person name="Tanaka T."/>
            <person name="Ishii S."/>
            <person name="Yamamoto J."/>
            <person name="Saito K."/>
            <person name="Kawai Y."/>
            <person name="Isono Y."/>
            <person name="Nakamura Y."/>
            <person name="Nagahari K."/>
            <person name="Murakami K."/>
            <person name="Yasuda T."/>
            <person name="Iwayanagi T."/>
            <person name="Wagatsuma M."/>
            <person name="Shiratori A."/>
            <person name="Sudo H."/>
            <person name="Hosoiri T."/>
            <person name="Kaku Y."/>
            <person name="Kodaira H."/>
            <person name="Kondo H."/>
            <person name="Sugawara M."/>
            <person name="Takahashi M."/>
            <person name="Kanda K."/>
            <person name="Yokoi T."/>
            <person name="Furuya T."/>
            <person name="Kikkawa E."/>
            <person name="Omura Y."/>
            <person name="Abe K."/>
            <person name="Kamihara K."/>
            <person name="Katsuta N."/>
            <person name="Sato K."/>
            <person name="Tanikawa M."/>
            <person name="Yamazaki M."/>
            <person name="Ninomiya K."/>
            <person name="Ishibashi T."/>
            <person name="Yamashita H."/>
            <person name="Murakawa K."/>
            <person name="Fujimori K."/>
            <person name="Tanai H."/>
            <person name="Kimata M."/>
            <person name="Watanabe M."/>
            <person name="Hiraoka S."/>
            <person name="Chiba Y."/>
            <person name="Ishida S."/>
            <person name="Ono Y."/>
            <person name="Takiguchi S."/>
            <person name="Watanabe S."/>
            <person name="Yosida M."/>
            <person name="Hotuta T."/>
            <person name="Kusano J."/>
            <person name="Kanehori K."/>
            <person name="Takahashi-Fujii A."/>
            <person name="Hara H."/>
            <person name="Tanase T.-O."/>
            <person name="Nomura Y."/>
            <person name="Togiya S."/>
            <person name="Komai F."/>
            <person name="Hara R."/>
            <person name="Takeuchi K."/>
            <person name="Arita M."/>
            <person name="Imose N."/>
            <person name="Musashino K."/>
            <person name="Yuuki H."/>
            <person name="Oshima A."/>
            <person name="Sasaki N."/>
            <person name="Aotsuka S."/>
            <person name="Yoshikawa Y."/>
            <person name="Matsunawa H."/>
            <person name="Ichihara T."/>
            <person name="Shiohata N."/>
            <person name="Sano S."/>
            <person name="Moriya S."/>
            <person name="Momiyama H."/>
            <person name="Satoh N."/>
            <person name="Takami S."/>
            <person name="Terashima Y."/>
            <person name="Suzuki O."/>
            <person name="Nakagawa S."/>
            <person name="Senoh A."/>
            <person name="Mizoguchi H."/>
            <person name="Goto Y."/>
            <person name="Shimizu F."/>
            <person name="Wakebe H."/>
            <person name="Hishigaki H."/>
            <person name="Watanabe T."/>
            <person name="Sugiyama A."/>
            <person name="Takemoto M."/>
            <person name="Kawakami B."/>
            <person name="Yamazaki M."/>
            <person name="Watanabe K."/>
            <person name="Kumagai A."/>
            <person name="Itakura S."/>
            <person name="Fukuzumi Y."/>
            <person name="Fujimori Y."/>
            <person name="Komiyama M."/>
            <person name="Tashiro H."/>
            <person name="Tanigami A."/>
            <person name="Fujiwara T."/>
            <person name="Ono T."/>
            <person name="Yamada K."/>
            <person name="Fujii Y."/>
            <person name="Ozaki K."/>
            <person name="Hirao M."/>
            <person name="Ohmori Y."/>
            <person name="Kawabata A."/>
            <person name="Hikiji T."/>
            <person name="Kobatake N."/>
            <person name="Inagaki H."/>
            <person name="Ikema Y."/>
            <person name="Okamoto S."/>
            <person name="Okitani R."/>
            <person name="Kawakami T."/>
            <person name="Noguchi S."/>
            <person name="Itoh T."/>
            <person name="Shigeta K."/>
            <person name="Senba T."/>
            <person name="Matsumura K."/>
            <person name="Nakajima Y."/>
            <person name="Mizuno T."/>
            <person name="Morinaga M."/>
            <person name="Sasaki M."/>
            <person name="Togashi T."/>
            <person name="Oyama M."/>
            <person name="Hata H."/>
            <person name="Watanabe M."/>
            <person name="Komatsu T."/>
            <person name="Mizushima-Sugano J."/>
            <person name="Satoh T."/>
            <person name="Shirai Y."/>
            <person name="Takahashi Y."/>
            <person name="Nakagawa K."/>
            <person name="Okumura K."/>
            <person name="Nagase T."/>
            <person name="Nomura N."/>
            <person name="Kikuchi H."/>
            <person name="Masuho Y."/>
            <person name="Yamashita R."/>
            <person name="Nakai K."/>
            <person name="Yada T."/>
            <person name="Nakamura Y."/>
            <person name="Ohara O."/>
            <person name="Isogai T."/>
            <person name="Sugano S."/>
        </authorList>
    </citation>
    <scope>NUCLEOTIDE SEQUENCE [LARGE SCALE MRNA] (ISOFORM 1)</scope>
</reference>
<reference key="3">
    <citation type="journal article" date="2005" name="DNA Res.">
        <title>Signal sequence and keyword trap in silico for selection of full-length human cDNAs encoding secretion or membrane proteins from oligo-capped cDNA libraries.</title>
        <authorList>
            <person name="Otsuki T."/>
            <person name="Ota T."/>
            <person name="Nishikawa T."/>
            <person name="Hayashi K."/>
            <person name="Suzuki Y."/>
            <person name="Yamamoto J."/>
            <person name="Wakamatsu A."/>
            <person name="Kimura K."/>
            <person name="Sakamoto K."/>
            <person name="Hatano N."/>
            <person name="Kawai Y."/>
            <person name="Ishii S."/>
            <person name="Saito K."/>
            <person name="Kojima S."/>
            <person name="Sugiyama T."/>
            <person name="Ono T."/>
            <person name="Okano K."/>
            <person name="Yoshikawa Y."/>
            <person name="Aotsuka S."/>
            <person name="Sasaki N."/>
            <person name="Hattori A."/>
            <person name="Okumura K."/>
            <person name="Nagai K."/>
            <person name="Sugano S."/>
            <person name="Isogai T."/>
        </authorList>
    </citation>
    <scope>NUCLEOTIDE SEQUENCE [LARGE SCALE MRNA] (ISOFORM 2)</scope>
    <source>
        <tissue>Placenta</tissue>
    </source>
</reference>
<reference key="4">
    <citation type="journal article" date="2004" name="Nature">
        <title>The DNA sequence and comparative analysis of human chromosome 5.</title>
        <authorList>
            <person name="Schmutz J."/>
            <person name="Martin J."/>
            <person name="Terry A."/>
            <person name="Couronne O."/>
            <person name="Grimwood J."/>
            <person name="Lowry S."/>
            <person name="Gordon L.A."/>
            <person name="Scott D."/>
            <person name="Xie G."/>
            <person name="Huang W."/>
            <person name="Hellsten U."/>
            <person name="Tran-Gyamfi M."/>
            <person name="She X."/>
            <person name="Prabhakar S."/>
            <person name="Aerts A."/>
            <person name="Altherr M."/>
            <person name="Bajorek E."/>
            <person name="Black S."/>
            <person name="Branscomb E."/>
            <person name="Caoile C."/>
            <person name="Challacombe J.F."/>
            <person name="Chan Y.M."/>
            <person name="Denys M."/>
            <person name="Detter J.C."/>
            <person name="Escobar J."/>
            <person name="Flowers D."/>
            <person name="Fotopulos D."/>
            <person name="Glavina T."/>
            <person name="Gomez M."/>
            <person name="Gonzales E."/>
            <person name="Goodstein D."/>
            <person name="Grigoriev I."/>
            <person name="Groza M."/>
            <person name="Hammon N."/>
            <person name="Hawkins T."/>
            <person name="Haydu L."/>
            <person name="Israni S."/>
            <person name="Jett J."/>
            <person name="Kadner K."/>
            <person name="Kimball H."/>
            <person name="Kobayashi A."/>
            <person name="Lopez F."/>
            <person name="Lou Y."/>
            <person name="Martinez D."/>
            <person name="Medina C."/>
            <person name="Morgan J."/>
            <person name="Nandkeshwar R."/>
            <person name="Noonan J.P."/>
            <person name="Pitluck S."/>
            <person name="Pollard M."/>
            <person name="Predki P."/>
            <person name="Priest J."/>
            <person name="Ramirez L."/>
            <person name="Retterer J."/>
            <person name="Rodriguez A."/>
            <person name="Rogers S."/>
            <person name="Salamov A."/>
            <person name="Salazar A."/>
            <person name="Thayer N."/>
            <person name="Tice H."/>
            <person name="Tsai M."/>
            <person name="Ustaszewska A."/>
            <person name="Vo N."/>
            <person name="Wheeler J."/>
            <person name="Wu K."/>
            <person name="Yang J."/>
            <person name="Dickson M."/>
            <person name="Cheng J.-F."/>
            <person name="Eichler E.E."/>
            <person name="Olsen A."/>
            <person name="Pennacchio L.A."/>
            <person name="Rokhsar D.S."/>
            <person name="Richardson P."/>
            <person name="Lucas S.M."/>
            <person name="Myers R.M."/>
            <person name="Rubin E.M."/>
        </authorList>
    </citation>
    <scope>NUCLEOTIDE SEQUENCE [LARGE SCALE GENOMIC DNA]</scope>
</reference>
<reference key="5">
    <citation type="journal article" date="2004" name="Genome Res.">
        <title>The status, quality, and expansion of the NIH full-length cDNA project: the Mammalian Gene Collection (MGC).</title>
        <authorList>
            <consortium name="The MGC Project Team"/>
        </authorList>
    </citation>
    <scope>NUCLEOTIDE SEQUENCE [LARGE SCALE MRNA] (ISOFORM 1)</scope>
    <source>
        <tissue>Uterus</tissue>
    </source>
</reference>
<reference key="6">
    <citation type="journal article" date="1999" name="Mol. Biol. Cell">
        <title>Localization and recycling of gp27 (hp24gamma3): complex formation with other p24 family members.</title>
        <authorList>
            <person name="Fullekrug J."/>
            <person name="Suganuma T."/>
            <person name="Tang B.L."/>
            <person name="Hong W."/>
            <person name="Storrie B."/>
            <person name="Nilsson T."/>
        </authorList>
    </citation>
    <scope>SUBCELLULAR LOCATION</scope>
    <scope>GLYCOSYLATION</scope>
    <scope>SUBUNIT</scope>
</reference>
<reference key="7">
    <citation type="journal article" date="2002" name="J. Biol. Chem.">
        <title>Oligomeric state and stoichiometry of p24 proteins in the early secretory pathway.</title>
        <authorList>
            <person name="Jenne N."/>
            <person name="Frey K."/>
            <person name="Brugger B."/>
            <person name="Wieland F.T."/>
        </authorList>
    </citation>
    <scope>SUBCELLULAR LOCATION</scope>
    <scope>SUBUNIT</scope>
</reference>
<reference key="8">
    <citation type="journal article" date="2006" name="Mol. Cell. Biol.">
        <title>Coatomer, the coat protein of COPI transport vesicles, discriminates endoplasmic reticulum residents from p24 proteins.</title>
        <authorList>
            <person name="Bethune J."/>
            <person name="Kol M."/>
            <person name="Hoffmann J."/>
            <person name="Reckmann I."/>
            <person name="Brugger B."/>
            <person name="Wieland F."/>
        </authorList>
    </citation>
    <scope>INTERACTION WITH COPG1</scope>
</reference>
<dbReference type="EMBL" id="AF151867">
    <property type="protein sequence ID" value="AAD34104.1"/>
    <property type="molecule type" value="mRNA"/>
</dbReference>
<dbReference type="EMBL" id="AK027512">
    <property type="protein sequence ID" value="BAB55166.1"/>
    <property type="molecule type" value="mRNA"/>
</dbReference>
<dbReference type="EMBL" id="AK074962">
    <property type="protein sequence ID" value="BAC11318.1"/>
    <property type="molecule type" value="mRNA"/>
</dbReference>
<dbReference type="EMBL" id="AK075218">
    <property type="protein sequence ID" value="BAC11479.1"/>
    <property type="molecule type" value="mRNA"/>
</dbReference>
<dbReference type="EMBL" id="AC010226">
    <property type="status" value="NOT_ANNOTATED_CDS"/>
    <property type="molecule type" value="Genomic_DNA"/>
</dbReference>
<dbReference type="EMBL" id="BC019349">
    <property type="protein sequence ID" value="AAH19349.1"/>
    <property type="molecule type" value="mRNA"/>
</dbReference>
<dbReference type="CCDS" id="CCDS4120.1">
    <molecule id="Q9Y3B3-1"/>
</dbReference>
<dbReference type="RefSeq" id="NP_001157941.1">
    <molecule id="Q9Y3B3-2"/>
    <property type="nucleotide sequence ID" value="NM_001164469.3"/>
</dbReference>
<dbReference type="RefSeq" id="NP_861974.1">
    <molecule id="Q9Y3B3-1"/>
    <property type="nucleotide sequence ID" value="NM_181836.6"/>
</dbReference>
<dbReference type="SMR" id="Q9Y3B3"/>
<dbReference type="BioGRID" id="119221">
    <property type="interactions" value="94"/>
</dbReference>
<dbReference type="BioGRID" id="970651">
    <property type="interactions" value="10"/>
</dbReference>
<dbReference type="FunCoup" id="Q9Y3B3">
    <property type="interactions" value="2634"/>
</dbReference>
<dbReference type="IntAct" id="Q9Y3B3">
    <property type="interactions" value="72"/>
</dbReference>
<dbReference type="MINT" id="Q9Y3B3"/>
<dbReference type="STRING" id="9606.ENSP00000405926"/>
<dbReference type="TCDB" id="9.B.188.1.8">
    <property type="family name" value="the transmembrane emp24 domain-containing protein (tmed) family"/>
</dbReference>
<dbReference type="GlyConnect" id="1845">
    <property type="glycosylation" value="5 N-Linked glycans (1 site)"/>
</dbReference>
<dbReference type="GlyCosmos" id="Q9Y3B3">
    <property type="glycosylation" value="1 site, 5 glycans"/>
</dbReference>
<dbReference type="GlyGen" id="Q9Y3B3">
    <property type="glycosylation" value="2 sites, 6 N-linked glycans (1 site), 1 O-linked glycan (1 site)"/>
</dbReference>
<dbReference type="iPTMnet" id="Q9Y3B3"/>
<dbReference type="PhosphoSitePlus" id="Q9Y3B3"/>
<dbReference type="SwissPalm" id="Q9Y3B3"/>
<dbReference type="BioMuta" id="TMED7"/>
<dbReference type="DMDM" id="62299080"/>
<dbReference type="jPOST" id="Q9Y3B3"/>
<dbReference type="MassIVE" id="Q9Y3B3"/>
<dbReference type="PaxDb" id="9606-ENSP00000405926"/>
<dbReference type="PeptideAtlas" id="Q9Y3B3"/>
<dbReference type="ProteomicsDB" id="86001">
    <molecule id="Q9Y3B3-1"/>
</dbReference>
<dbReference type="Pumba" id="Q9Y3B3"/>
<dbReference type="TopDownProteomics" id="Q9Y3B3-1">
    <molecule id="Q9Y3B3-1"/>
</dbReference>
<dbReference type="Antibodypedia" id="2440">
    <property type="antibodies" value="24 antibodies from 13 providers"/>
</dbReference>
<dbReference type="DNASU" id="51014"/>
<dbReference type="Ensembl" id="ENST00000456936.4">
    <molecule id="Q9Y3B3-1"/>
    <property type="protein sequence ID" value="ENSP00000405926.3"/>
    <property type="gene ID" value="ENSG00000134970.14"/>
</dbReference>
<dbReference type="GeneID" id="51014"/>
<dbReference type="KEGG" id="hsa:100302736"/>
<dbReference type="KEGG" id="hsa:51014"/>
<dbReference type="MANE-Select" id="ENST00000456936.4">
    <property type="protein sequence ID" value="ENSP00000405926.3"/>
    <property type="RefSeq nucleotide sequence ID" value="NM_181836.6"/>
    <property type="RefSeq protein sequence ID" value="NP_861974.1"/>
</dbReference>
<dbReference type="UCSC" id="uc003krf.4">
    <molecule id="Q9Y3B3-1"/>
    <property type="organism name" value="human"/>
</dbReference>
<dbReference type="AGR" id="HGNC:24253"/>
<dbReference type="AGR" id="HGNC:33945"/>
<dbReference type="CTD" id="100302736"/>
<dbReference type="CTD" id="51014"/>
<dbReference type="DisGeNET" id="100302736"/>
<dbReference type="DisGeNET" id="51014"/>
<dbReference type="GeneCards" id="TMED7"/>
<dbReference type="HGNC" id="HGNC:24253">
    <property type="gene designation" value="TMED7"/>
</dbReference>
<dbReference type="HPA" id="ENSG00000134970">
    <property type="expression patterns" value="Low tissue specificity"/>
</dbReference>
<dbReference type="MalaCards" id="TMED7"/>
<dbReference type="MIM" id="619990">
    <property type="type" value="gene"/>
</dbReference>
<dbReference type="neXtProt" id="NX_Q9Y3B3"/>
<dbReference type="OpenTargets" id="ENSG00000134970"/>
<dbReference type="OpenTargets" id="ENSG00000251201"/>
<dbReference type="PharmGKB" id="PA134891536"/>
<dbReference type="PharmGKB" id="PA165660570"/>
<dbReference type="VEuPathDB" id="HostDB:ENSG00000134970"/>
<dbReference type="eggNOG" id="KOG1693">
    <property type="taxonomic scope" value="Eukaryota"/>
</dbReference>
<dbReference type="GeneTree" id="ENSGT00940000158463"/>
<dbReference type="HOGENOM" id="CLU_066963_6_0_1"/>
<dbReference type="InParanoid" id="Q9Y3B3"/>
<dbReference type="OMA" id="TRVAYCH"/>
<dbReference type="OrthoDB" id="62956at2759"/>
<dbReference type="PAN-GO" id="Q9Y3B3">
    <property type="GO annotations" value="7 GO annotations based on evolutionary models"/>
</dbReference>
<dbReference type="PhylomeDB" id="Q9Y3B3"/>
<dbReference type="TreeFam" id="TF313000"/>
<dbReference type="PathwayCommons" id="Q9Y3B3"/>
<dbReference type="Reactome" id="R-HSA-6807878">
    <property type="pathway name" value="COPI-mediated anterograde transport"/>
</dbReference>
<dbReference type="Reactome" id="R-HSA-6811434">
    <property type="pathway name" value="COPI-dependent Golgi-to-ER retrograde traffic"/>
</dbReference>
<dbReference type="SignaLink" id="Q9Y3B3"/>
<dbReference type="BioGRID-ORCS" id="100302736">
    <property type="hits" value="8 hits in 965 CRISPR screens"/>
</dbReference>
<dbReference type="BioGRID-ORCS" id="51014">
    <property type="hits" value="362 hits in 1117 CRISPR screens"/>
</dbReference>
<dbReference type="Pharos" id="Q9Y3B3">
    <property type="development level" value="Tdark"/>
</dbReference>
<dbReference type="PRO" id="PR:Q9Y3B3"/>
<dbReference type="Proteomes" id="UP000005640">
    <property type="component" value="Chromosome 5"/>
</dbReference>
<dbReference type="RNAct" id="Q9Y3B3">
    <property type="molecule type" value="protein"/>
</dbReference>
<dbReference type="Bgee" id="ENSG00000134970">
    <property type="expression patterns" value="Expressed in choroid plexus epithelium and 212 other cell types or tissues"/>
</dbReference>
<dbReference type="ExpressionAtlas" id="Q9Y3B3">
    <property type="expression patterns" value="baseline and differential"/>
</dbReference>
<dbReference type="GO" id="GO:0030126">
    <property type="term" value="C:COPI vesicle coat"/>
    <property type="evidence" value="ECO:0000304"/>
    <property type="project" value="UniProtKB"/>
</dbReference>
<dbReference type="GO" id="GO:0030127">
    <property type="term" value="C:COPII vesicle coat"/>
    <property type="evidence" value="ECO:0000304"/>
    <property type="project" value="UniProtKB"/>
</dbReference>
<dbReference type="GO" id="GO:0030134">
    <property type="term" value="C:COPII-coated ER to Golgi transport vesicle"/>
    <property type="evidence" value="ECO:0000318"/>
    <property type="project" value="GO_Central"/>
</dbReference>
<dbReference type="GO" id="GO:0005783">
    <property type="term" value="C:endoplasmic reticulum"/>
    <property type="evidence" value="ECO:0000314"/>
    <property type="project" value="UniProtKB"/>
</dbReference>
<dbReference type="GO" id="GO:0005789">
    <property type="term" value="C:endoplasmic reticulum membrane"/>
    <property type="evidence" value="ECO:0000304"/>
    <property type="project" value="Reactome"/>
</dbReference>
<dbReference type="GO" id="GO:0005793">
    <property type="term" value="C:endoplasmic reticulum-Golgi intermediate compartment"/>
    <property type="evidence" value="ECO:0000314"/>
    <property type="project" value="UniProtKB"/>
</dbReference>
<dbReference type="GO" id="GO:0033116">
    <property type="term" value="C:endoplasmic reticulum-Golgi intermediate compartment membrane"/>
    <property type="evidence" value="ECO:0000304"/>
    <property type="project" value="Reactome"/>
</dbReference>
<dbReference type="GO" id="GO:0005794">
    <property type="term" value="C:Golgi apparatus"/>
    <property type="evidence" value="ECO:0000314"/>
    <property type="project" value="UniProtKB"/>
</dbReference>
<dbReference type="GO" id="GO:0000139">
    <property type="term" value="C:Golgi membrane"/>
    <property type="evidence" value="ECO:0000304"/>
    <property type="project" value="Reactome"/>
</dbReference>
<dbReference type="GO" id="GO:0030133">
    <property type="term" value="C:transport vesicle"/>
    <property type="evidence" value="ECO:0000304"/>
    <property type="project" value="Reactome"/>
</dbReference>
<dbReference type="GO" id="GO:0006888">
    <property type="term" value="P:endoplasmic reticulum to Golgi vesicle-mediated transport"/>
    <property type="evidence" value="ECO:0000318"/>
    <property type="project" value="GO_Central"/>
</dbReference>
<dbReference type="GO" id="GO:0007030">
    <property type="term" value="P:Golgi organization"/>
    <property type="evidence" value="ECO:0000318"/>
    <property type="project" value="GO_Central"/>
</dbReference>
<dbReference type="GO" id="GO:0006886">
    <property type="term" value="P:intracellular protein transport"/>
    <property type="evidence" value="ECO:0000318"/>
    <property type="project" value="GO_Central"/>
</dbReference>
<dbReference type="FunFam" id="2.60.120.680:FF:000013">
    <property type="entry name" value="Transmembrane emp24 domain containing 3"/>
    <property type="match status" value="1"/>
</dbReference>
<dbReference type="Gene3D" id="2.60.120.680">
    <property type="entry name" value="GOLD domain"/>
    <property type="match status" value="1"/>
</dbReference>
<dbReference type="InterPro" id="IPR015720">
    <property type="entry name" value="Emp24-like"/>
</dbReference>
<dbReference type="InterPro" id="IPR009038">
    <property type="entry name" value="GOLD_dom"/>
</dbReference>
<dbReference type="InterPro" id="IPR036598">
    <property type="entry name" value="GOLD_dom_sf"/>
</dbReference>
<dbReference type="PANTHER" id="PTHR22811">
    <property type="entry name" value="TRANSMEMBRANE EMP24 DOMAIN-CONTAINING PROTEIN"/>
    <property type="match status" value="1"/>
</dbReference>
<dbReference type="Pfam" id="PF01105">
    <property type="entry name" value="EMP24_GP25L"/>
    <property type="match status" value="1"/>
</dbReference>
<dbReference type="SMART" id="SM01190">
    <property type="entry name" value="EMP24_GP25L"/>
    <property type="match status" value="1"/>
</dbReference>
<dbReference type="SUPFAM" id="SSF101576">
    <property type="entry name" value="Supernatant protein factor (SPF), C-terminal domain"/>
    <property type="match status" value="1"/>
</dbReference>
<dbReference type="PROSITE" id="PS50866">
    <property type="entry name" value="GOLD"/>
    <property type="match status" value="1"/>
</dbReference>